<dbReference type="EC" id="3.1.3.16"/>
<dbReference type="EMBL" id="AB079672">
    <property type="protein sequence ID" value="BAB84701.1"/>
    <property type="molecule type" value="mRNA"/>
</dbReference>
<dbReference type="EMBL" id="AC007048">
    <property type="protein sequence ID" value="AAD21710.2"/>
    <property type="molecule type" value="Genomic_DNA"/>
</dbReference>
<dbReference type="EMBL" id="CP002685">
    <property type="protein sequence ID" value="AEC07049.1"/>
    <property type="molecule type" value="Genomic_DNA"/>
</dbReference>
<dbReference type="EMBL" id="CP002685">
    <property type="protein sequence ID" value="AEC07050.1"/>
    <property type="molecule type" value="Genomic_DNA"/>
</dbReference>
<dbReference type="EMBL" id="AF411787">
    <property type="protein sequence ID" value="AAL06477.1"/>
    <property type="molecule type" value="mRNA"/>
</dbReference>
<dbReference type="EMBL" id="AY093793">
    <property type="protein sequence ID" value="AAM10409.1"/>
    <property type="molecule type" value="mRNA"/>
</dbReference>
<dbReference type="EMBL" id="BX842471">
    <property type="status" value="NOT_ANNOTATED_CDS"/>
    <property type="molecule type" value="mRNA"/>
</dbReference>
<dbReference type="EMBL" id="AK175113">
    <property type="protein sequence ID" value="BAD42876.1"/>
    <property type="molecule type" value="mRNA"/>
</dbReference>
<dbReference type="EMBL" id="AK175149">
    <property type="protein sequence ID" value="BAD42912.1"/>
    <property type="molecule type" value="mRNA"/>
</dbReference>
<dbReference type="EMBL" id="AK175260">
    <property type="protein sequence ID" value="BAD43023.1"/>
    <property type="molecule type" value="mRNA"/>
</dbReference>
<dbReference type="EMBL" id="AK175913">
    <property type="protein sequence ID" value="BAD43676.1"/>
    <property type="molecule type" value="mRNA"/>
</dbReference>
<dbReference type="EMBL" id="AK175927">
    <property type="protein sequence ID" value="BAD43690.1"/>
    <property type="molecule type" value="mRNA"/>
</dbReference>
<dbReference type="EMBL" id="AK176179">
    <property type="protein sequence ID" value="BAD43942.1"/>
    <property type="molecule type" value="mRNA"/>
</dbReference>
<dbReference type="EMBL" id="AK176199">
    <property type="protein sequence ID" value="BAD43962.1"/>
    <property type="molecule type" value="mRNA"/>
</dbReference>
<dbReference type="EMBL" id="AK176314">
    <property type="protein sequence ID" value="BAD44077.1"/>
    <property type="molecule type" value="mRNA"/>
</dbReference>
<dbReference type="EMBL" id="AK220638">
    <property type="protein sequence ID" value="BAD95097.1"/>
    <property type="molecule type" value="mRNA"/>
</dbReference>
<dbReference type="PIR" id="E84591">
    <property type="entry name" value="E84591"/>
</dbReference>
<dbReference type="RefSeq" id="NP_565480.1">
    <molecule id="Q9SIU8-2"/>
    <property type="nucleotide sequence ID" value="NM_127627.3"/>
</dbReference>
<dbReference type="RefSeq" id="NP_973490.1">
    <molecule id="Q9SIU8-1"/>
    <property type="nucleotide sequence ID" value="NM_201761.1"/>
</dbReference>
<dbReference type="SMR" id="Q9SIU8"/>
<dbReference type="BioGRID" id="1943">
    <property type="interactions" value="2"/>
</dbReference>
<dbReference type="FunCoup" id="Q9SIU8">
    <property type="interactions" value="157"/>
</dbReference>
<dbReference type="IntAct" id="Q9SIU8">
    <property type="interactions" value="1"/>
</dbReference>
<dbReference type="STRING" id="3702.Q9SIU8"/>
<dbReference type="iPTMnet" id="Q9SIU8"/>
<dbReference type="PaxDb" id="3702-AT2G20630.2"/>
<dbReference type="ProteomicsDB" id="248704">
    <molecule id="Q9SIU8-1"/>
</dbReference>
<dbReference type="EnsemblPlants" id="AT2G20630.1">
    <molecule id="Q9SIU8-2"/>
    <property type="protein sequence ID" value="AT2G20630.1"/>
    <property type="gene ID" value="AT2G20630"/>
</dbReference>
<dbReference type="EnsemblPlants" id="AT2G20630.2">
    <molecule id="Q9SIU8-1"/>
    <property type="protein sequence ID" value="AT2G20630.2"/>
    <property type="gene ID" value="AT2G20630"/>
</dbReference>
<dbReference type="GeneID" id="816590"/>
<dbReference type="Gramene" id="AT2G20630.1">
    <molecule id="Q9SIU8-2"/>
    <property type="protein sequence ID" value="AT2G20630.1"/>
    <property type="gene ID" value="AT2G20630"/>
</dbReference>
<dbReference type="Gramene" id="AT2G20630.2">
    <molecule id="Q9SIU8-1"/>
    <property type="protein sequence ID" value="AT2G20630.2"/>
    <property type="gene ID" value="AT2G20630"/>
</dbReference>
<dbReference type="KEGG" id="ath:AT2G20630"/>
<dbReference type="Araport" id="AT2G20630"/>
<dbReference type="TAIR" id="AT2G20630">
    <property type="gene designation" value="PIA1"/>
</dbReference>
<dbReference type="eggNOG" id="KOG0698">
    <property type="taxonomic scope" value="Eukaryota"/>
</dbReference>
<dbReference type="InParanoid" id="Q9SIU8"/>
<dbReference type="OMA" id="EPDITHE"/>
<dbReference type="PhylomeDB" id="Q9SIU8"/>
<dbReference type="CD-CODE" id="4299E36E">
    <property type="entry name" value="Nucleolus"/>
</dbReference>
<dbReference type="PRO" id="PR:Q9SIU8"/>
<dbReference type="Proteomes" id="UP000006548">
    <property type="component" value="Chromosome 2"/>
</dbReference>
<dbReference type="ExpressionAtlas" id="Q9SIU8">
    <property type="expression patterns" value="baseline and differential"/>
</dbReference>
<dbReference type="GO" id="GO:0005739">
    <property type="term" value="C:mitochondrion"/>
    <property type="evidence" value="ECO:0007005"/>
    <property type="project" value="TAIR"/>
</dbReference>
<dbReference type="GO" id="GO:0046872">
    <property type="term" value="F:metal ion binding"/>
    <property type="evidence" value="ECO:0007669"/>
    <property type="project" value="UniProtKB-KW"/>
</dbReference>
<dbReference type="GO" id="GO:0004722">
    <property type="term" value="F:protein serine/threonine phosphatase activity"/>
    <property type="evidence" value="ECO:0007669"/>
    <property type="project" value="UniProtKB-EC"/>
</dbReference>
<dbReference type="CDD" id="cd00143">
    <property type="entry name" value="PP2Cc"/>
    <property type="match status" value="1"/>
</dbReference>
<dbReference type="FunFam" id="3.60.40.10:FF:000010">
    <property type="entry name" value="Probable protein phosphatase 2C 39"/>
    <property type="match status" value="1"/>
</dbReference>
<dbReference type="Gene3D" id="3.60.40.10">
    <property type="entry name" value="PPM-type phosphatase domain"/>
    <property type="match status" value="1"/>
</dbReference>
<dbReference type="InterPro" id="IPR015655">
    <property type="entry name" value="PP2C"/>
</dbReference>
<dbReference type="InterPro" id="IPR036457">
    <property type="entry name" value="PPM-type-like_dom_sf"/>
</dbReference>
<dbReference type="InterPro" id="IPR001932">
    <property type="entry name" value="PPM-type_phosphatase-like_dom"/>
</dbReference>
<dbReference type="PANTHER" id="PTHR47992">
    <property type="entry name" value="PROTEIN PHOSPHATASE"/>
    <property type="match status" value="1"/>
</dbReference>
<dbReference type="Pfam" id="PF00481">
    <property type="entry name" value="PP2C"/>
    <property type="match status" value="1"/>
</dbReference>
<dbReference type="SMART" id="SM00332">
    <property type="entry name" value="PP2Cc"/>
    <property type="match status" value="1"/>
</dbReference>
<dbReference type="SUPFAM" id="SSF81606">
    <property type="entry name" value="PP2C-like"/>
    <property type="match status" value="1"/>
</dbReference>
<dbReference type="PROSITE" id="PS51746">
    <property type="entry name" value="PPM_2"/>
    <property type="match status" value="1"/>
</dbReference>
<evidence type="ECO:0000250" key="1"/>
<evidence type="ECO:0000255" key="2">
    <source>
        <dbReference type="PROSITE-ProRule" id="PRU01082"/>
    </source>
</evidence>
<evidence type="ECO:0000269" key="3">
    <source>
    </source>
</evidence>
<evidence type="ECO:0000303" key="4">
    <source>
    </source>
</evidence>
<evidence type="ECO:0000303" key="5">
    <source ref="1"/>
</evidence>
<evidence type="ECO:0000303" key="6">
    <source ref="6"/>
</evidence>
<evidence type="ECO:0000305" key="7"/>
<keyword id="KW-0025">Alternative splicing</keyword>
<keyword id="KW-0903">Direct protein sequencing</keyword>
<keyword id="KW-0378">Hydrolase</keyword>
<keyword id="KW-0460">Magnesium</keyword>
<keyword id="KW-0464">Manganese</keyword>
<keyword id="KW-0479">Metal-binding</keyword>
<keyword id="KW-0904">Protein phosphatase</keyword>
<keyword id="KW-1185">Reference proteome</keyword>
<gene>
    <name type="primary">PPC3-1.2</name>
    <name type="ordered locus">At2g20630</name>
    <name type="ORF">F23N11.5</name>
</gene>
<protein>
    <recommendedName>
        <fullName>Probable protein phosphatase 2C 20</fullName>
        <shortName>AtPP2C20</shortName>
        <ecNumber>3.1.3.16</ecNumber>
    </recommendedName>
    <alternativeName>
        <fullName>AtPPC3;1.2</fullName>
    </alternativeName>
</protein>
<accession>Q9SIU8</accession>
<accession>Q680F4</accession>
<accession>Q945Q0</accession>
<comment type="function">
    <text>May be involved in defense signaling.</text>
</comment>
<comment type="catalytic activity">
    <reaction>
        <text>O-phospho-L-seryl-[protein] + H2O = L-seryl-[protein] + phosphate</text>
        <dbReference type="Rhea" id="RHEA:20629"/>
        <dbReference type="Rhea" id="RHEA-COMP:9863"/>
        <dbReference type="Rhea" id="RHEA-COMP:11604"/>
        <dbReference type="ChEBI" id="CHEBI:15377"/>
        <dbReference type="ChEBI" id="CHEBI:29999"/>
        <dbReference type="ChEBI" id="CHEBI:43474"/>
        <dbReference type="ChEBI" id="CHEBI:83421"/>
        <dbReference type="EC" id="3.1.3.16"/>
    </reaction>
</comment>
<comment type="catalytic activity">
    <reaction>
        <text>O-phospho-L-threonyl-[protein] + H2O = L-threonyl-[protein] + phosphate</text>
        <dbReference type="Rhea" id="RHEA:47004"/>
        <dbReference type="Rhea" id="RHEA-COMP:11060"/>
        <dbReference type="Rhea" id="RHEA-COMP:11605"/>
        <dbReference type="ChEBI" id="CHEBI:15377"/>
        <dbReference type="ChEBI" id="CHEBI:30013"/>
        <dbReference type="ChEBI" id="CHEBI:43474"/>
        <dbReference type="ChEBI" id="CHEBI:61977"/>
        <dbReference type="EC" id="3.1.3.16"/>
    </reaction>
</comment>
<comment type="cofactor">
    <cofactor evidence="1">
        <name>Mg(2+)</name>
        <dbReference type="ChEBI" id="CHEBI:18420"/>
    </cofactor>
    <cofactor evidence="1">
        <name>Mn(2+)</name>
        <dbReference type="ChEBI" id="CHEBI:29035"/>
    </cofactor>
    <text evidence="1">Binds 2 magnesium or manganese ions per subunit.</text>
</comment>
<comment type="alternative products">
    <event type="alternative splicing"/>
    <isoform>
        <id>Q9SIU8-1</id>
        <name>1</name>
        <sequence type="displayed"/>
    </isoform>
    <isoform>
        <id>Q9SIU8-2</id>
        <name>2</name>
        <sequence type="described" ref="VSP_036763 VSP_036764"/>
    </isoform>
</comment>
<comment type="induction">
    <text evidence="3">By the avirulence factor AvrRpm1 (at protein level).</text>
</comment>
<comment type="similarity">
    <text evidence="7">Belongs to the PP2C family.</text>
</comment>
<comment type="sequence caution" evidence="7">
    <conflict type="miscellaneous discrepancy">
        <sequence resource="EMBL" id="BX842471"/>
    </conflict>
    <text>Sequencing errors.</text>
</comment>
<reference key="1">
    <citation type="submission" date="2002-02" db="EMBL/GenBank/DDBJ databases">
        <title>Substrate specificity of type 2C protein phosphatases (PP2C) in Arabidopsis thaliana.</title>
        <authorList>
            <person name="Izumi S."/>
            <person name="Yamada M."/>
            <person name="Ohsato H."/>
            <person name="Miyazaki S."/>
            <person name="Bohnert H.J."/>
            <person name="Fukuhara T."/>
        </authorList>
    </citation>
    <scope>NUCLEOTIDE SEQUENCE [MRNA] (ISOFORM 2)</scope>
</reference>
<reference key="2">
    <citation type="journal article" date="1999" name="Nature">
        <title>Sequence and analysis of chromosome 2 of the plant Arabidopsis thaliana.</title>
        <authorList>
            <person name="Lin X."/>
            <person name="Kaul S."/>
            <person name="Rounsley S.D."/>
            <person name="Shea T.P."/>
            <person name="Benito M.-I."/>
            <person name="Town C.D."/>
            <person name="Fujii C.Y."/>
            <person name="Mason T.M."/>
            <person name="Bowman C.L."/>
            <person name="Barnstead M.E."/>
            <person name="Feldblyum T.V."/>
            <person name="Buell C.R."/>
            <person name="Ketchum K.A."/>
            <person name="Lee J.J."/>
            <person name="Ronning C.M."/>
            <person name="Koo H.L."/>
            <person name="Moffat K.S."/>
            <person name="Cronin L.A."/>
            <person name="Shen M."/>
            <person name="Pai G."/>
            <person name="Van Aken S."/>
            <person name="Umayam L."/>
            <person name="Tallon L.J."/>
            <person name="Gill J.E."/>
            <person name="Adams M.D."/>
            <person name="Carrera A.J."/>
            <person name="Creasy T.H."/>
            <person name="Goodman H.M."/>
            <person name="Somerville C.R."/>
            <person name="Copenhaver G.P."/>
            <person name="Preuss D."/>
            <person name="Nierman W.C."/>
            <person name="White O."/>
            <person name="Eisen J.A."/>
            <person name="Salzberg S.L."/>
            <person name="Fraser C.M."/>
            <person name="Venter J.C."/>
        </authorList>
    </citation>
    <scope>NUCLEOTIDE SEQUENCE [LARGE SCALE GENOMIC DNA]</scope>
    <source>
        <strain>cv. Columbia</strain>
    </source>
</reference>
<reference key="3">
    <citation type="journal article" date="2017" name="Plant J.">
        <title>Araport11: a complete reannotation of the Arabidopsis thaliana reference genome.</title>
        <authorList>
            <person name="Cheng C.Y."/>
            <person name="Krishnakumar V."/>
            <person name="Chan A.P."/>
            <person name="Thibaud-Nissen F."/>
            <person name="Schobel S."/>
            <person name="Town C.D."/>
        </authorList>
    </citation>
    <scope>GENOME REANNOTATION</scope>
    <source>
        <strain>cv. Columbia</strain>
    </source>
</reference>
<reference key="4">
    <citation type="journal article" date="2003" name="Science">
        <title>Empirical analysis of transcriptional activity in the Arabidopsis genome.</title>
        <authorList>
            <person name="Yamada K."/>
            <person name="Lim J."/>
            <person name="Dale J.M."/>
            <person name="Chen H."/>
            <person name="Shinn P."/>
            <person name="Palm C.J."/>
            <person name="Southwick A.M."/>
            <person name="Wu H.C."/>
            <person name="Kim C.J."/>
            <person name="Nguyen M."/>
            <person name="Pham P.K."/>
            <person name="Cheuk R.F."/>
            <person name="Karlin-Newmann G."/>
            <person name="Liu S.X."/>
            <person name="Lam B."/>
            <person name="Sakano H."/>
            <person name="Wu T."/>
            <person name="Yu G."/>
            <person name="Miranda M."/>
            <person name="Quach H.L."/>
            <person name="Tripp M."/>
            <person name="Chang C.H."/>
            <person name="Lee J.M."/>
            <person name="Toriumi M.J."/>
            <person name="Chan M.M."/>
            <person name="Tang C.C."/>
            <person name="Onodera C.S."/>
            <person name="Deng J.M."/>
            <person name="Akiyama K."/>
            <person name="Ansari Y."/>
            <person name="Arakawa T."/>
            <person name="Banh J."/>
            <person name="Banno F."/>
            <person name="Bowser L."/>
            <person name="Brooks S.Y."/>
            <person name="Carninci P."/>
            <person name="Chao Q."/>
            <person name="Choy N."/>
            <person name="Enju A."/>
            <person name="Goldsmith A.D."/>
            <person name="Gurjal M."/>
            <person name="Hansen N.F."/>
            <person name="Hayashizaki Y."/>
            <person name="Johnson-Hopson C."/>
            <person name="Hsuan V.W."/>
            <person name="Iida K."/>
            <person name="Karnes M."/>
            <person name="Khan S."/>
            <person name="Koesema E."/>
            <person name="Ishida J."/>
            <person name="Jiang P.X."/>
            <person name="Jones T."/>
            <person name="Kawai J."/>
            <person name="Kamiya A."/>
            <person name="Meyers C."/>
            <person name="Nakajima M."/>
            <person name="Narusaka M."/>
            <person name="Seki M."/>
            <person name="Sakurai T."/>
            <person name="Satou M."/>
            <person name="Tamse R."/>
            <person name="Vaysberg M."/>
            <person name="Wallender E.K."/>
            <person name="Wong C."/>
            <person name="Yamamura Y."/>
            <person name="Yuan S."/>
            <person name="Shinozaki K."/>
            <person name="Davis R.W."/>
            <person name="Theologis A."/>
            <person name="Ecker J.R."/>
        </authorList>
    </citation>
    <scope>NUCLEOTIDE SEQUENCE [LARGE SCALE MRNA] (ISOFORM 2)</scope>
    <source>
        <strain>cv. Columbia</strain>
    </source>
</reference>
<reference key="5">
    <citation type="journal article" date="2004" name="Genome Res.">
        <title>Whole genome sequence comparisons and 'full-length' cDNA sequences: a combined approach to evaluate and improve Arabidopsis genome annotation.</title>
        <authorList>
            <person name="Castelli V."/>
            <person name="Aury J.-M."/>
            <person name="Jaillon O."/>
            <person name="Wincker P."/>
            <person name="Clepet C."/>
            <person name="Menard M."/>
            <person name="Cruaud C."/>
            <person name="Quetier F."/>
            <person name="Scarpelli C."/>
            <person name="Schaechter V."/>
            <person name="Temple G."/>
            <person name="Caboche M."/>
            <person name="Weissenbach J."/>
            <person name="Salanoubat M."/>
        </authorList>
    </citation>
    <scope>NUCLEOTIDE SEQUENCE [LARGE SCALE MRNA] (ISOFORM 1)</scope>
    <source>
        <strain>cv. Columbia</strain>
    </source>
</reference>
<reference key="6">
    <citation type="submission" date="2005-03" db="EMBL/GenBank/DDBJ databases">
        <title>Large-scale analysis of RIKEN Arabidopsis full-length (RAFL) cDNAs.</title>
        <authorList>
            <person name="Totoki Y."/>
            <person name="Seki M."/>
            <person name="Ishida J."/>
            <person name="Nakajima M."/>
            <person name="Enju A."/>
            <person name="Kamiya A."/>
            <person name="Narusaka M."/>
            <person name="Shin-i T."/>
            <person name="Nakagawa M."/>
            <person name="Sakamoto N."/>
            <person name="Oishi K."/>
            <person name="Kohara Y."/>
            <person name="Kobayashi M."/>
            <person name="Toyoda A."/>
            <person name="Sakaki Y."/>
            <person name="Sakurai T."/>
            <person name="Iida K."/>
            <person name="Akiyama K."/>
            <person name="Satou M."/>
            <person name="Toyoda T."/>
            <person name="Konagaya A."/>
            <person name="Carninci P."/>
            <person name="Kawai J."/>
            <person name="Hayashizaki Y."/>
            <person name="Shinozaki K."/>
        </authorList>
    </citation>
    <scope>NUCLEOTIDE SEQUENCE [LARGE SCALE MRNA] (ISOFORM 2)</scope>
    <source>
        <strain>cv. Columbia</strain>
    </source>
</reference>
<reference key="7">
    <citation type="journal article" date="1998" name="Plant J.">
        <title>Use of a proteome strategy for tagging proteins present at the plasma membrane.</title>
        <authorList>
            <person name="Santoni V."/>
            <person name="Rouquie D."/>
            <person name="Doumas P."/>
            <person name="Mansion M."/>
            <person name="Boutry M."/>
            <person name="Degand H."/>
            <person name="Dupree P."/>
            <person name="Packman L."/>
            <person name="Sherrier J."/>
            <person name="Prime T."/>
            <person name="Bauw G."/>
            <person name="Posada E."/>
            <person name="Rouze P."/>
            <person name="Dehais P."/>
            <person name="Sahnoun I."/>
            <person name="Barlier I."/>
            <person name="Rossignol M."/>
        </authorList>
    </citation>
    <scope>PROTEIN SEQUENCE OF 56-69 AND 103-116</scope>
</reference>
<reference key="8">
    <citation type="journal article" date="2008" name="BMC Genomics">
        <title>Genome-wide and expression analysis of protein phosphatase 2C in rice and Arabidopsis.</title>
        <authorList>
            <person name="Xue T."/>
            <person name="Wang D."/>
            <person name="Zhang S."/>
            <person name="Ehlting J."/>
            <person name="Ni F."/>
            <person name="Jacab S."/>
            <person name="Zheng C."/>
            <person name="Zhong Y."/>
        </authorList>
    </citation>
    <scope>GENE FAMILY</scope>
    <scope>NOMENCLATURE</scope>
</reference>
<reference key="9">
    <citation type="journal article" date="2009" name="Proteomics">
        <title>Combining subproteome enrichment and Rubisco depletion enables identification of low abundance proteins differentially regulated during plant defense.</title>
        <authorList>
            <person name="Widjaja I."/>
            <person name="Naumann K."/>
            <person name="Roth U."/>
            <person name="Wolf N."/>
            <person name="Mackey D."/>
            <person name="Dangl J.L."/>
            <person name="Scheel D."/>
            <person name="Lee J."/>
        </authorList>
    </citation>
    <scope>INDUCTION</scope>
    <scope>IDENTIFICATION BY MASS SPECTROMETRY</scope>
</reference>
<name>P2C20_ARATH</name>
<proteinExistence type="evidence at protein level"/>
<organism>
    <name type="scientific">Arabidopsis thaliana</name>
    <name type="common">Mouse-ear cress</name>
    <dbReference type="NCBI Taxonomy" id="3702"/>
    <lineage>
        <taxon>Eukaryota</taxon>
        <taxon>Viridiplantae</taxon>
        <taxon>Streptophyta</taxon>
        <taxon>Embryophyta</taxon>
        <taxon>Tracheophyta</taxon>
        <taxon>Spermatophyta</taxon>
        <taxon>Magnoliopsida</taxon>
        <taxon>eudicotyledons</taxon>
        <taxon>Gunneridae</taxon>
        <taxon>Pentapetalae</taxon>
        <taxon>rosids</taxon>
        <taxon>malvids</taxon>
        <taxon>Brassicales</taxon>
        <taxon>Brassicaceae</taxon>
        <taxon>Camelineae</taxon>
        <taxon>Arabidopsis</taxon>
    </lineage>
</organism>
<sequence>MAGREILHKMKVGLCGSDTGRGKTKVWKNIAHGYDFVKGKAGHPMEDYVVSEFKKVDGHDLGLFAIFDGHLGHDVAKYLQTNLFDNILKEKDFWTDTKNAIRNAYISTDAVILEQSLKLGKGGSTAVTGILIDGKTLVIANVGDSRAVMSKNGVASQLSVDHEPSKEQKEIESRGGFVSNIPGDVPRVDGQLAVARAFGDKSLKIHLSSDPDIRDENIDHETEFILFASDGVWKVMSNQEAVDLIKSIKDPQAAAKELIEEAVSKQSTDDISCIVPCFLRREALSERYCR</sequence>
<feature type="chain" id="PRO_0000367950" description="Probable protein phosphatase 2C 20">
    <location>
        <begin position="1"/>
        <end position="290"/>
    </location>
</feature>
<feature type="domain" description="PPM-type phosphatase" evidence="2">
    <location>
        <begin position="31"/>
        <end position="278"/>
    </location>
</feature>
<feature type="binding site" evidence="1">
    <location>
        <position position="68"/>
    </location>
    <ligand>
        <name>Mn(2+)</name>
        <dbReference type="ChEBI" id="CHEBI:29035"/>
        <label>1</label>
    </ligand>
</feature>
<feature type="binding site" evidence="1">
    <location>
        <position position="68"/>
    </location>
    <ligand>
        <name>Mn(2+)</name>
        <dbReference type="ChEBI" id="CHEBI:29035"/>
        <label>2</label>
    </ligand>
</feature>
<feature type="binding site" evidence="1">
    <location>
        <position position="69"/>
    </location>
    <ligand>
        <name>Mn(2+)</name>
        <dbReference type="ChEBI" id="CHEBI:29035"/>
        <label>1</label>
    </ligand>
</feature>
<feature type="binding site" evidence="1">
    <location>
        <position position="230"/>
    </location>
    <ligand>
        <name>Mn(2+)</name>
        <dbReference type="ChEBI" id="CHEBI:29035"/>
        <label>2</label>
    </ligand>
</feature>
<feature type="binding site" evidence="1">
    <location>
        <position position="269"/>
    </location>
    <ligand>
        <name>Mn(2+)</name>
        <dbReference type="ChEBI" id="CHEBI:29035"/>
        <label>2</label>
    </ligand>
</feature>
<feature type="splice variant" id="VSP_036763" description="In isoform 2." evidence="4 5 6">
    <original>PCFL</original>
    <variation>VRFQ</variation>
    <location>
        <begin position="276"/>
        <end position="279"/>
    </location>
</feature>
<feature type="splice variant" id="VSP_036764" description="In isoform 2." evidence="4 5 6">
    <location>
        <begin position="280"/>
        <end position="290"/>
    </location>
</feature>
<feature type="sequence conflict" description="In Ref. 5; BAD43676." evidence="7" ref="5">
    <original>G</original>
    <variation>D</variation>
    <location>
        <position position="39"/>
    </location>
</feature>